<keyword id="KW-0963">Cytoplasm</keyword>
<keyword id="KW-0275">Fatty acid biosynthesis</keyword>
<keyword id="KW-0276">Fatty acid metabolism</keyword>
<keyword id="KW-0444">Lipid biosynthesis</keyword>
<keyword id="KW-0443">Lipid metabolism</keyword>
<keyword id="KW-0460">Magnesium</keyword>
<keyword id="KW-0479">Metal-binding</keyword>
<keyword id="KW-0808">Transferase</keyword>
<accession>C6DBM7</accession>
<sequence>MAILGLGTDIVEIARIEAVIERSGERLARRVLTDAEWAHYQQHQQPVRFLAKRFAVKEAAAKAFGTGIRNGLAFNQFEVFNDELGKPCLRFFAKAAELAEQMGVRHVHVTLADERRYACATVIVES</sequence>
<comment type="function">
    <text evidence="1">Transfers the 4'-phosphopantetheine moiety from coenzyme A to a Ser of acyl-carrier-protein.</text>
</comment>
<comment type="catalytic activity">
    <reaction evidence="1">
        <text>apo-[ACP] + CoA = holo-[ACP] + adenosine 3',5'-bisphosphate + H(+)</text>
        <dbReference type="Rhea" id="RHEA:12068"/>
        <dbReference type="Rhea" id="RHEA-COMP:9685"/>
        <dbReference type="Rhea" id="RHEA-COMP:9690"/>
        <dbReference type="ChEBI" id="CHEBI:15378"/>
        <dbReference type="ChEBI" id="CHEBI:29999"/>
        <dbReference type="ChEBI" id="CHEBI:57287"/>
        <dbReference type="ChEBI" id="CHEBI:58343"/>
        <dbReference type="ChEBI" id="CHEBI:64479"/>
        <dbReference type="EC" id="2.7.8.7"/>
    </reaction>
</comment>
<comment type="cofactor">
    <cofactor evidence="1">
        <name>Mg(2+)</name>
        <dbReference type="ChEBI" id="CHEBI:18420"/>
    </cofactor>
</comment>
<comment type="subcellular location">
    <subcellularLocation>
        <location evidence="1">Cytoplasm</location>
    </subcellularLocation>
</comment>
<comment type="similarity">
    <text evidence="1">Belongs to the P-Pant transferase superfamily. AcpS family.</text>
</comment>
<feature type="chain" id="PRO_1000202801" description="Holo-[acyl-carrier-protein] synthase">
    <location>
        <begin position="1"/>
        <end position="126"/>
    </location>
</feature>
<feature type="binding site" evidence="1">
    <location>
        <position position="9"/>
    </location>
    <ligand>
        <name>Mg(2+)</name>
        <dbReference type="ChEBI" id="CHEBI:18420"/>
    </ligand>
</feature>
<feature type="binding site" evidence="1">
    <location>
        <position position="58"/>
    </location>
    <ligand>
        <name>Mg(2+)</name>
        <dbReference type="ChEBI" id="CHEBI:18420"/>
    </ligand>
</feature>
<proteinExistence type="inferred from homology"/>
<protein>
    <recommendedName>
        <fullName evidence="1">Holo-[acyl-carrier-protein] synthase</fullName>
        <shortName evidence="1">Holo-ACP synthase</shortName>
        <ecNumber evidence="1">2.7.8.7</ecNumber>
    </recommendedName>
    <alternativeName>
        <fullName evidence="1">4'-phosphopantetheinyl transferase AcpS</fullName>
    </alternativeName>
</protein>
<name>ACPS_PECCP</name>
<gene>
    <name evidence="1" type="primary">acpS</name>
    <name type="ordered locus">PC1_3067</name>
</gene>
<dbReference type="EC" id="2.7.8.7" evidence="1"/>
<dbReference type="EMBL" id="CP001657">
    <property type="protein sequence ID" value="ACT14090.1"/>
    <property type="molecule type" value="Genomic_DNA"/>
</dbReference>
<dbReference type="RefSeq" id="WP_015841240.1">
    <property type="nucleotide sequence ID" value="NC_012917.1"/>
</dbReference>
<dbReference type="SMR" id="C6DBM7"/>
<dbReference type="STRING" id="561230.PC1_3067"/>
<dbReference type="GeneID" id="67793097"/>
<dbReference type="KEGG" id="pct:PC1_3067"/>
<dbReference type="eggNOG" id="COG0736">
    <property type="taxonomic scope" value="Bacteria"/>
</dbReference>
<dbReference type="HOGENOM" id="CLU_089696_3_1_6"/>
<dbReference type="OrthoDB" id="517356at2"/>
<dbReference type="Proteomes" id="UP000002736">
    <property type="component" value="Chromosome"/>
</dbReference>
<dbReference type="GO" id="GO:0005737">
    <property type="term" value="C:cytoplasm"/>
    <property type="evidence" value="ECO:0007669"/>
    <property type="project" value="UniProtKB-SubCell"/>
</dbReference>
<dbReference type="GO" id="GO:0008897">
    <property type="term" value="F:holo-[acyl-carrier-protein] synthase activity"/>
    <property type="evidence" value="ECO:0007669"/>
    <property type="project" value="UniProtKB-UniRule"/>
</dbReference>
<dbReference type="GO" id="GO:0000287">
    <property type="term" value="F:magnesium ion binding"/>
    <property type="evidence" value="ECO:0007669"/>
    <property type="project" value="UniProtKB-UniRule"/>
</dbReference>
<dbReference type="GO" id="GO:0006633">
    <property type="term" value="P:fatty acid biosynthetic process"/>
    <property type="evidence" value="ECO:0007669"/>
    <property type="project" value="UniProtKB-UniRule"/>
</dbReference>
<dbReference type="FunFam" id="3.90.470.20:FF:000001">
    <property type="entry name" value="Holo-[acyl-carrier-protein] synthase"/>
    <property type="match status" value="1"/>
</dbReference>
<dbReference type="Gene3D" id="3.90.470.20">
    <property type="entry name" value="4'-phosphopantetheinyl transferase domain"/>
    <property type="match status" value="1"/>
</dbReference>
<dbReference type="HAMAP" id="MF_00101">
    <property type="entry name" value="AcpS"/>
    <property type="match status" value="1"/>
</dbReference>
<dbReference type="InterPro" id="IPR008278">
    <property type="entry name" value="4-PPantetheinyl_Trfase_dom"/>
</dbReference>
<dbReference type="InterPro" id="IPR037143">
    <property type="entry name" value="4-PPantetheinyl_Trfase_dom_sf"/>
</dbReference>
<dbReference type="InterPro" id="IPR002582">
    <property type="entry name" value="ACPS"/>
</dbReference>
<dbReference type="InterPro" id="IPR004568">
    <property type="entry name" value="Ppantetheine-prot_Trfase_dom"/>
</dbReference>
<dbReference type="NCBIfam" id="TIGR00516">
    <property type="entry name" value="acpS"/>
    <property type="match status" value="1"/>
</dbReference>
<dbReference type="NCBIfam" id="TIGR00556">
    <property type="entry name" value="pantethn_trn"/>
    <property type="match status" value="1"/>
</dbReference>
<dbReference type="Pfam" id="PF01648">
    <property type="entry name" value="ACPS"/>
    <property type="match status" value="1"/>
</dbReference>
<dbReference type="SUPFAM" id="SSF56214">
    <property type="entry name" value="4'-phosphopantetheinyl transferase"/>
    <property type="match status" value="1"/>
</dbReference>
<evidence type="ECO:0000255" key="1">
    <source>
        <dbReference type="HAMAP-Rule" id="MF_00101"/>
    </source>
</evidence>
<organism>
    <name type="scientific">Pectobacterium carotovorum subsp. carotovorum (strain PC1)</name>
    <dbReference type="NCBI Taxonomy" id="561230"/>
    <lineage>
        <taxon>Bacteria</taxon>
        <taxon>Pseudomonadati</taxon>
        <taxon>Pseudomonadota</taxon>
        <taxon>Gammaproteobacteria</taxon>
        <taxon>Enterobacterales</taxon>
        <taxon>Pectobacteriaceae</taxon>
        <taxon>Pectobacterium</taxon>
    </lineage>
</organism>
<reference key="1">
    <citation type="submission" date="2009-07" db="EMBL/GenBank/DDBJ databases">
        <title>Complete sequence of Pectobacterium carotovorum subsp. carotovorum PC1.</title>
        <authorList>
            <consortium name="US DOE Joint Genome Institute"/>
            <person name="Lucas S."/>
            <person name="Copeland A."/>
            <person name="Lapidus A."/>
            <person name="Glavina del Rio T."/>
            <person name="Tice H."/>
            <person name="Bruce D."/>
            <person name="Goodwin L."/>
            <person name="Pitluck S."/>
            <person name="Munk A.C."/>
            <person name="Brettin T."/>
            <person name="Detter J.C."/>
            <person name="Han C."/>
            <person name="Tapia R."/>
            <person name="Larimer F."/>
            <person name="Land M."/>
            <person name="Hauser L."/>
            <person name="Kyrpides N."/>
            <person name="Mikhailova N."/>
            <person name="Balakrishnan V."/>
            <person name="Glasner J."/>
            <person name="Perna N.T."/>
        </authorList>
    </citation>
    <scope>NUCLEOTIDE SEQUENCE [LARGE SCALE GENOMIC DNA]</scope>
    <source>
        <strain>PC1</strain>
    </source>
</reference>